<name>BCAR3_BOVIN</name>
<feature type="initiator methionine" description="Removed" evidence="2">
    <location>
        <position position="1"/>
    </location>
</feature>
<feature type="chain" id="PRO_0000230283" description="Breast cancer anti-estrogen resistance protein 3 homolog">
    <location>
        <begin position="2"/>
        <end position="826"/>
    </location>
</feature>
<feature type="domain" description="SH2" evidence="5">
    <location>
        <begin position="154"/>
        <end position="253"/>
    </location>
</feature>
<feature type="domain" description="Ras-GEF" evidence="4">
    <location>
        <begin position="549"/>
        <end position="819"/>
    </location>
</feature>
<feature type="region of interest" description="Disordered" evidence="6">
    <location>
        <begin position="46"/>
        <end position="81"/>
    </location>
</feature>
<feature type="region of interest" description="Disordered" evidence="6">
    <location>
        <begin position="268"/>
        <end position="287"/>
    </location>
</feature>
<feature type="region of interest" description="Disordered" evidence="6">
    <location>
        <begin position="294"/>
        <end position="321"/>
    </location>
</feature>
<feature type="region of interest" description="Disordered" evidence="6">
    <location>
        <begin position="348"/>
        <end position="406"/>
    </location>
</feature>
<feature type="region of interest" description="Disordered" evidence="6">
    <location>
        <begin position="480"/>
        <end position="501"/>
    </location>
</feature>
<feature type="region of interest" description="Mediates the interaction with BCAR1/p130CAS" evidence="2">
    <location>
        <begin position="745"/>
        <end position="749"/>
    </location>
</feature>
<feature type="compositionally biased region" description="Polar residues" evidence="6">
    <location>
        <begin position="350"/>
        <end position="361"/>
    </location>
</feature>
<feature type="site" description="Required for interaction with NEDD9" evidence="3">
    <location>
        <position position="749"/>
    </location>
</feature>
<feature type="modified residue" description="N-acetylalanine" evidence="2">
    <location>
        <position position="2"/>
    </location>
</feature>
<feature type="modified residue" description="Phosphoserine" evidence="2">
    <location>
        <position position="32"/>
    </location>
</feature>
<feature type="modified residue" description="Phosphoserine" evidence="2">
    <location>
        <position position="78"/>
    </location>
</feature>
<feature type="modified residue" description="Phosphoserine" evidence="2">
    <location>
        <position position="83"/>
    </location>
</feature>
<feature type="modified residue" description="Phosphoserine" evidence="2">
    <location>
        <position position="182"/>
    </location>
</feature>
<feature type="modified residue" description="Phosphoserine" evidence="2">
    <location>
        <position position="291"/>
    </location>
</feature>
<feature type="modified residue" description="N6-methyllysine" evidence="2">
    <location>
        <position position="335"/>
    </location>
</feature>
<feature type="modified residue" description="Phosphoserine" evidence="2">
    <location>
        <position position="359"/>
    </location>
</feature>
<feature type="modified residue" description="Phosphoserine" evidence="2">
    <location>
        <position position="364"/>
    </location>
</feature>
<feature type="modified residue" description="Phosphoserine" evidence="2">
    <location>
        <position position="376"/>
    </location>
</feature>
<feature type="modified residue" description="Phosphoserine" evidence="3">
    <location>
        <position position="472"/>
    </location>
</feature>
<feature type="sequence conflict" description="In Ref. 1; AAX46429." evidence="7" ref="1">
    <original>L</original>
    <variation>I</variation>
    <location>
        <position position="110"/>
    </location>
</feature>
<feature type="sequence conflict" description="In Ref. 2; AAI05367." evidence="7" ref="2">
    <original>R</original>
    <variation>K</variation>
    <location>
        <position position="764"/>
    </location>
</feature>
<accession>Q58DL5</accession>
<accession>Q2KJF5</accession>
<proteinExistence type="evidence at transcript level"/>
<comment type="function">
    <text evidence="1 2 3">Acts as an adapter protein downstream of several growth factor receptors to promote cell proliferation, migration, and redistribution of actin fibers (By similarity). Specifically involved in INS/insulin signaling pathway by mediating MAPK1/ERK2-MAPK3/ERK1 activation and DNA synthesis (By similarity). Promotes insulin-mediated membrane ruffling (By similarity). In response to vasoconstrictor peptide EDN1, involved in the activation of RAP1 downstream of PTK2B via interaction with phosphorylated BCAR1. Inhibits cell migration and invasion via regulation of TGFB-mediated matrix digestion, actin filament rearrangement, and inhibition of invadopodia activity. May inhibit TGFB-SMAD signaling, via facilitating BCAR1 and SMAD2 and/or SMAD3 interaction (By similarity). Regulates EGF-induced DNA synthesis (By similarity). Required for the maintenance of ocular lens morphology and structural integrity, potentially via regulation of focal adhesion complex signaling. Acts upstream of PTPRA to regulate the localization of BCAR1 and PTPRA to focal adhesions, via regulation of SRC-mediated phosphorylation of PTPRA. Positively regulates integrin-induced tyrosine phosphorylation of BCAR1. Acts as a guanine nucleotide exchange factor (GEF) for small GTPases RALA, RAP1A and RRAS (By similarity). However, in a contrasting study, lacks GEF activity towards RAP1 (By similarity).</text>
</comment>
<comment type="subunit">
    <text evidence="2 3">Part of a complex comprised of PTPRA, BCAR1, BCAR3 (via SH2 domain) and SRC; the formation of the complex is dependent on integrin mediated-tyrosine phosphorylation of PTPRA (By similarity). Within the complex, interacts (via SH2 domain) with PTPRA (when phosphorylated on 'Tyr-797') (By similarity). Interacts (via Ras-GEF domain) with BCAR1 (By similarity). Interacts (via Ras-GEF domain) with NEDD9 (By similarity). Interacts with PTK2/FAK1 (By similarity). Interacts with PTPN1. Interacts (via SH2 domain) with EGFR (when tyrosine-phosphorylated) (By similarity).</text>
</comment>
<comment type="subcellular location">
    <subcellularLocation>
        <location evidence="3">Cytoplasm</location>
    </subcellularLocation>
    <subcellularLocation>
        <location evidence="3">Cell junction</location>
        <location evidence="3">Focal adhesion</location>
    </subcellularLocation>
    <text evidence="3">Localization to focal adhesions depends on interaction with PTPRA.</text>
</comment>
<comment type="domain">
    <text evidence="2 3">The SH2 domain mediates interaction with tyrosine-phosphorylated proteins (By similarity). However, not involved in the binding to phosphorylated BCAR1 (By similarity). Required for cell cycle progression in response to INS/insulin (By similarity). Required for regulation of EGF-induced DNA synthesis (By similarity).</text>
</comment>
<comment type="domain">
    <text evidence="2">The Ras-GEF domain appears to adopt a closed conformation rendering it incapable of carrying out canonical exchange factor function, this closed conformation is probably required for interaction with BCAR1.</text>
</comment>
<comment type="PTM">
    <text evidence="3">Phosphorylated on tyrosine residues.</text>
</comment>
<comment type="caution">
    <text evidence="2 3">The guanine nucleotide exchange factor (GEF) activity is controversial. One study showed GEF activity towards RALA, RAP1A and RRAS (By similarity). However, in another study, a construct containing only the Ras-GEF domain lacks GEF activity towards RAP1 (By similarity).</text>
</comment>
<reference key="1">
    <citation type="journal article" date="2005" name="BMC Genomics">
        <title>Characterization of 954 bovine full-CDS cDNA sequences.</title>
        <authorList>
            <person name="Harhay G.P."/>
            <person name="Sonstegard T.S."/>
            <person name="Keele J.W."/>
            <person name="Heaton M.P."/>
            <person name="Clawson M.L."/>
            <person name="Snelling W.M."/>
            <person name="Wiedmann R.T."/>
            <person name="Van Tassell C.P."/>
            <person name="Smith T.P.L."/>
        </authorList>
    </citation>
    <scope>NUCLEOTIDE SEQUENCE [LARGE SCALE MRNA]</scope>
</reference>
<reference key="2">
    <citation type="submission" date="2005-09" db="EMBL/GenBank/DDBJ databases">
        <authorList>
            <consortium name="NIH - Mammalian Gene Collection (MGC) project"/>
        </authorList>
    </citation>
    <scope>NUCLEOTIDE SEQUENCE [LARGE SCALE MRNA]</scope>
    <source>
        <strain>Crossbred X Angus</strain>
        <tissue>Ileum</tissue>
    </source>
</reference>
<evidence type="ECO:0000250" key="1">
    <source>
        <dbReference type="UniProtKB" id="D3ZAZ5"/>
    </source>
</evidence>
<evidence type="ECO:0000250" key="2">
    <source>
        <dbReference type="UniProtKB" id="O75815"/>
    </source>
</evidence>
<evidence type="ECO:0000250" key="3">
    <source>
        <dbReference type="UniProtKB" id="Q9QZK2"/>
    </source>
</evidence>
<evidence type="ECO:0000255" key="4">
    <source>
        <dbReference type="PROSITE-ProRule" id="PRU00168"/>
    </source>
</evidence>
<evidence type="ECO:0000255" key="5">
    <source>
        <dbReference type="PROSITE-ProRule" id="PRU00191"/>
    </source>
</evidence>
<evidence type="ECO:0000256" key="6">
    <source>
        <dbReference type="SAM" id="MobiDB-lite"/>
    </source>
</evidence>
<evidence type="ECO:0000305" key="7"/>
<sequence>MAAGKFASLPRNMPVNHQFPLASSMDLLSSKSPLVERRADAYQDVSIHGTLPRKKKGPPPIRSCDNFSHVGTLPHSRSPRHHSPLIQDVIQEQPLQDWKGEAFTFRDQHLLDPTLEYVKFSKERHVMDRTPERLKKELEEELLLSSEDLRSHAWYHGRIPRQVSENLMQRDGDFLVRDSLSSPGDFVLTCQWKNLPQHFKIRRTVVRLSEAYSRVQYQFEMESFDSIPGLVRCYVGNRRPISQQSGAIIFQPVNRTVPLRCLEERYGASSPDRAHEGSLTEGRPDAAKRLSLTVGGTQAREQGLPRGNLLRNKEKSGSQPACLDHMQDRRALSLKAHQSESYLPIGGKLTPQSPSVGTSPCPNSPVFRTGSEPTLSPAVVRRVSSDARPGEALRGSDSQLCPKPPPKPCKAPLLKAPPSPSIWLNSEANYCELNPALAASYDGASRLPFCAQDSYVELLTAKQNGGLGTRNSDTSYLILDDDDRTRPWKPPPAPGDTVGEDQDTFVMPLLETTSSFKPNDFESKLLPPENKPLETSMLKRAKELFTNSDPKVIAQHLLSVDCKVARILEVSEEMRKNMGVNSGLELITLPYGHQLRLDIIERHNTMAIGIAVDILGCTGSLEDRAATLNKIIQVAVELKDSMGDLYSFSAIMKALEMPQITRLEKTWTALRHQYTQTAILYEKQLKPFSKVLHEGRESTCVPPNNVSVPLLMPLVTLMEREAVTFEGTDMWEKNDESCEIMLNHLATARLMAEAADSYRMNAERILAGFQPDEEMSEVFKTEFQMRLLWGSKGAQVNQTERYEKFNQILTALSRKLEPPPVKQMEF</sequence>
<dbReference type="EMBL" id="BT021582">
    <property type="protein sequence ID" value="AAX46429.1"/>
    <property type="molecule type" value="mRNA"/>
</dbReference>
<dbReference type="EMBL" id="BC105366">
    <property type="protein sequence ID" value="AAI05367.1"/>
    <property type="molecule type" value="mRNA"/>
</dbReference>
<dbReference type="RefSeq" id="NP_001019654.1">
    <property type="nucleotide sequence ID" value="NM_001024483.1"/>
</dbReference>
<dbReference type="RefSeq" id="XP_005204326.1">
    <property type="nucleotide sequence ID" value="XM_005204269.3"/>
</dbReference>
<dbReference type="RefSeq" id="XP_005204327.1">
    <property type="nucleotide sequence ID" value="XM_005204270.3"/>
</dbReference>
<dbReference type="RefSeq" id="XP_010801601.1">
    <property type="nucleotide sequence ID" value="XM_010803299.2"/>
</dbReference>
<dbReference type="SMR" id="Q58DL5"/>
<dbReference type="FunCoup" id="Q58DL5">
    <property type="interactions" value="439"/>
</dbReference>
<dbReference type="STRING" id="9913.ENSBTAP00000068264"/>
<dbReference type="iPTMnet" id="Q58DL5"/>
<dbReference type="PaxDb" id="9913-ENSBTAP00000055991"/>
<dbReference type="GeneID" id="506231"/>
<dbReference type="KEGG" id="bta:506231"/>
<dbReference type="CTD" id="8412"/>
<dbReference type="eggNOG" id="ENOG502QPX3">
    <property type="taxonomic scope" value="Eukaryota"/>
</dbReference>
<dbReference type="HOGENOM" id="CLU_015281_0_0_1"/>
<dbReference type="InParanoid" id="Q58DL5"/>
<dbReference type="OrthoDB" id="2412973at2759"/>
<dbReference type="TreeFam" id="TF323756"/>
<dbReference type="Proteomes" id="UP000009136">
    <property type="component" value="Unplaced"/>
</dbReference>
<dbReference type="GO" id="GO:0005737">
    <property type="term" value="C:cytoplasm"/>
    <property type="evidence" value="ECO:0007669"/>
    <property type="project" value="UniProtKB-SubCell"/>
</dbReference>
<dbReference type="GO" id="GO:0005925">
    <property type="term" value="C:focal adhesion"/>
    <property type="evidence" value="ECO:0000250"/>
    <property type="project" value="UniProtKB"/>
</dbReference>
<dbReference type="GO" id="GO:0016020">
    <property type="term" value="C:membrane"/>
    <property type="evidence" value="ECO:0000250"/>
    <property type="project" value="UniProtKB"/>
</dbReference>
<dbReference type="GO" id="GO:0005085">
    <property type="term" value="F:guanyl-nucleotide exchange factor activity"/>
    <property type="evidence" value="ECO:0007669"/>
    <property type="project" value="UniProtKB-KW"/>
</dbReference>
<dbReference type="GO" id="GO:0001784">
    <property type="term" value="F:phosphotyrosine residue binding"/>
    <property type="evidence" value="ECO:0000250"/>
    <property type="project" value="UniProtKB"/>
</dbReference>
<dbReference type="GO" id="GO:0086100">
    <property type="term" value="P:endothelin receptor signaling pathway"/>
    <property type="evidence" value="ECO:0000250"/>
    <property type="project" value="UniProtKB"/>
</dbReference>
<dbReference type="GO" id="GO:0007173">
    <property type="term" value="P:epidermal growth factor receptor signaling pathway"/>
    <property type="evidence" value="ECO:0000250"/>
    <property type="project" value="UniProtKB"/>
</dbReference>
<dbReference type="GO" id="GO:0008286">
    <property type="term" value="P:insulin receptor signaling pathway"/>
    <property type="evidence" value="ECO:0000250"/>
    <property type="project" value="UniProtKB"/>
</dbReference>
<dbReference type="GO" id="GO:0008284">
    <property type="term" value="P:positive regulation of cell population proliferation"/>
    <property type="evidence" value="ECO:0000250"/>
    <property type="project" value="UniProtKB"/>
</dbReference>
<dbReference type="GO" id="GO:0043547">
    <property type="term" value="P:positive regulation of GTPase activity"/>
    <property type="evidence" value="ECO:0000250"/>
    <property type="project" value="UniProtKB"/>
</dbReference>
<dbReference type="GO" id="GO:0043410">
    <property type="term" value="P:positive regulation of MAPK cascade"/>
    <property type="evidence" value="ECO:0000250"/>
    <property type="project" value="UniProtKB"/>
</dbReference>
<dbReference type="GO" id="GO:0007264">
    <property type="term" value="P:small GTPase-mediated signal transduction"/>
    <property type="evidence" value="ECO:0007669"/>
    <property type="project" value="InterPro"/>
</dbReference>
<dbReference type="CDD" id="cd10337">
    <property type="entry name" value="SH2_BCAR3"/>
    <property type="match status" value="1"/>
</dbReference>
<dbReference type="FunFam" id="1.10.840.10:FF:000007">
    <property type="entry name" value="SH2 domain containing 3C (Predicted)"/>
    <property type="match status" value="1"/>
</dbReference>
<dbReference type="FunFam" id="3.30.505.10:FF:000013">
    <property type="entry name" value="SH2 domain-containing protein 3C isoform X1"/>
    <property type="match status" value="1"/>
</dbReference>
<dbReference type="Gene3D" id="1.10.840.10">
    <property type="entry name" value="Ras guanine-nucleotide exchange factors catalytic domain"/>
    <property type="match status" value="1"/>
</dbReference>
<dbReference type="Gene3D" id="3.30.505.10">
    <property type="entry name" value="SH2 domain"/>
    <property type="match status" value="1"/>
</dbReference>
<dbReference type="InterPro" id="IPR023578">
    <property type="entry name" value="Ras_GEF_dom_sf"/>
</dbReference>
<dbReference type="InterPro" id="IPR001895">
    <property type="entry name" value="RASGEF_cat_dom"/>
</dbReference>
<dbReference type="InterPro" id="IPR036964">
    <property type="entry name" value="RASGEF_cat_dom_sf"/>
</dbReference>
<dbReference type="InterPro" id="IPR000980">
    <property type="entry name" value="SH2"/>
</dbReference>
<dbReference type="InterPro" id="IPR051853">
    <property type="entry name" value="SH2-Ras-GEF_adapter"/>
</dbReference>
<dbReference type="InterPro" id="IPR036860">
    <property type="entry name" value="SH2_dom_sf"/>
</dbReference>
<dbReference type="InterPro" id="IPR044102">
    <property type="entry name" value="SH2_SHEP1/BCAR3/NSP1"/>
</dbReference>
<dbReference type="PANTHER" id="PTHR14247:SF10">
    <property type="entry name" value="BREAST CANCER ANTI-ESTROGEN RESISTANCE PROTEIN 3"/>
    <property type="match status" value="1"/>
</dbReference>
<dbReference type="PANTHER" id="PTHR14247">
    <property type="entry name" value="BREAST CANCER ANTI-ESTROGEN RESISTANCE PROTEIN 3 HOMOLOG-LIKE PROTEIN"/>
    <property type="match status" value="1"/>
</dbReference>
<dbReference type="Pfam" id="PF00617">
    <property type="entry name" value="RasGEF"/>
    <property type="match status" value="1"/>
</dbReference>
<dbReference type="Pfam" id="PF00017">
    <property type="entry name" value="SH2"/>
    <property type="match status" value="1"/>
</dbReference>
<dbReference type="SMART" id="SM00147">
    <property type="entry name" value="RasGEF"/>
    <property type="match status" value="1"/>
</dbReference>
<dbReference type="SMART" id="SM00252">
    <property type="entry name" value="SH2"/>
    <property type="match status" value="1"/>
</dbReference>
<dbReference type="SUPFAM" id="SSF48366">
    <property type="entry name" value="Ras GEF"/>
    <property type="match status" value="1"/>
</dbReference>
<dbReference type="SUPFAM" id="SSF55550">
    <property type="entry name" value="SH2 domain"/>
    <property type="match status" value="1"/>
</dbReference>
<dbReference type="PROSITE" id="PS50009">
    <property type="entry name" value="RASGEF_CAT"/>
    <property type="match status" value="1"/>
</dbReference>
<dbReference type="PROSITE" id="PS50001">
    <property type="entry name" value="SH2"/>
    <property type="match status" value="1"/>
</dbReference>
<gene>
    <name type="primary">BCAR3</name>
</gene>
<keyword id="KW-0007">Acetylation</keyword>
<keyword id="KW-0965">Cell junction</keyword>
<keyword id="KW-0963">Cytoplasm</keyword>
<keyword id="KW-0344">Guanine-nucleotide releasing factor</keyword>
<keyword id="KW-0488">Methylation</keyword>
<keyword id="KW-0597">Phosphoprotein</keyword>
<keyword id="KW-1185">Reference proteome</keyword>
<keyword id="KW-0727">SH2 domain</keyword>
<organism>
    <name type="scientific">Bos taurus</name>
    <name type="common">Bovine</name>
    <dbReference type="NCBI Taxonomy" id="9913"/>
    <lineage>
        <taxon>Eukaryota</taxon>
        <taxon>Metazoa</taxon>
        <taxon>Chordata</taxon>
        <taxon>Craniata</taxon>
        <taxon>Vertebrata</taxon>
        <taxon>Euteleostomi</taxon>
        <taxon>Mammalia</taxon>
        <taxon>Eutheria</taxon>
        <taxon>Laurasiatheria</taxon>
        <taxon>Artiodactyla</taxon>
        <taxon>Ruminantia</taxon>
        <taxon>Pecora</taxon>
        <taxon>Bovidae</taxon>
        <taxon>Bovinae</taxon>
        <taxon>Bos</taxon>
    </lineage>
</organism>
<protein>
    <recommendedName>
        <fullName>Breast cancer anti-estrogen resistance protein 3 homolog</fullName>
    </recommendedName>
</protein>